<protein>
    <recommendedName>
        <fullName evidence="1">Glutamate racemase</fullName>
        <ecNumber evidence="1">5.1.1.3</ecNumber>
    </recommendedName>
</protein>
<evidence type="ECO:0000255" key="1">
    <source>
        <dbReference type="HAMAP-Rule" id="MF_00258"/>
    </source>
</evidence>
<evidence type="ECO:0000256" key="2">
    <source>
        <dbReference type="SAM" id="MobiDB-lite"/>
    </source>
</evidence>
<organism>
    <name type="scientific">Proteus mirabilis (strain HI4320)</name>
    <dbReference type="NCBI Taxonomy" id="529507"/>
    <lineage>
        <taxon>Bacteria</taxon>
        <taxon>Pseudomonadati</taxon>
        <taxon>Pseudomonadota</taxon>
        <taxon>Gammaproteobacteria</taxon>
        <taxon>Enterobacterales</taxon>
        <taxon>Morganellaceae</taxon>
        <taxon>Proteus</taxon>
    </lineage>
</organism>
<feature type="chain" id="PRO_1000114058" description="Glutamate racemase">
    <location>
        <begin position="1"/>
        <end position="288"/>
    </location>
</feature>
<feature type="region of interest" description="Disordered" evidence="2">
    <location>
        <begin position="1"/>
        <end position="21"/>
    </location>
</feature>
<feature type="compositionally biased region" description="Polar residues" evidence="2">
    <location>
        <begin position="8"/>
        <end position="21"/>
    </location>
</feature>
<feature type="active site" description="Proton donor/acceptor" evidence="1">
    <location>
        <position position="96"/>
    </location>
</feature>
<feature type="active site" description="Proton donor/acceptor" evidence="1">
    <location>
        <position position="209"/>
    </location>
</feature>
<feature type="binding site" evidence="1">
    <location>
        <begin position="32"/>
        <end position="33"/>
    </location>
    <ligand>
        <name>substrate</name>
    </ligand>
</feature>
<feature type="binding site" evidence="1">
    <location>
        <begin position="64"/>
        <end position="65"/>
    </location>
    <ligand>
        <name>substrate</name>
    </ligand>
</feature>
<feature type="binding site" evidence="1">
    <location>
        <begin position="97"/>
        <end position="98"/>
    </location>
    <ligand>
        <name>substrate</name>
    </ligand>
</feature>
<feature type="binding site" evidence="1">
    <location>
        <begin position="210"/>
        <end position="211"/>
    </location>
    <ligand>
        <name>substrate</name>
    </ligand>
</feature>
<gene>
    <name evidence="1" type="primary">murI</name>
    <name type="ordered locus">PMI3247</name>
</gene>
<dbReference type="EC" id="5.1.1.3" evidence="1"/>
<dbReference type="EMBL" id="AM942759">
    <property type="protein sequence ID" value="CAR46364.1"/>
    <property type="molecule type" value="Genomic_DNA"/>
</dbReference>
<dbReference type="RefSeq" id="WP_012368686.1">
    <property type="nucleotide sequence ID" value="NC_010554.1"/>
</dbReference>
<dbReference type="SMR" id="B4F1H6"/>
<dbReference type="EnsemblBacteria" id="CAR46364">
    <property type="protein sequence ID" value="CAR46364"/>
    <property type="gene ID" value="PMI3247"/>
</dbReference>
<dbReference type="GeneID" id="6802950"/>
<dbReference type="KEGG" id="pmr:PMI3247"/>
<dbReference type="PATRIC" id="fig|529507.6.peg.3174"/>
<dbReference type="eggNOG" id="COG0796">
    <property type="taxonomic scope" value="Bacteria"/>
</dbReference>
<dbReference type="HOGENOM" id="CLU_052344_2_0_6"/>
<dbReference type="UniPathway" id="UPA00219"/>
<dbReference type="Proteomes" id="UP000008319">
    <property type="component" value="Chromosome"/>
</dbReference>
<dbReference type="GO" id="GO:0008881">
    <property type="term" value="F:glutamate racemase activity"/>
    <property type="evidence" value="ECO:0007669"/>
    <property type="project" value="UniProtKB-UniRule"/>
</dbReference>
<dbReference type="GO" id="GO:0071555">
    <property type="term" value="P:cell wall organization"/>
    <property type="evidence" value="ECO:0007669"/>
    <property type="project" value="UniProtKB-KW"/>
</dbReference>
<dbReference type="GO" id="GO:0009252">
    <property type="term" value="P:peptidoglycan biosynthetic process"/>
    <property type="evidence" value="ECO:0007669"/>
    <property type="project" value="UniProtKB-UniRule"/>
</dbReference>
<dbReference type="GO" id="GO:0008360">
    <property type="term" value="P:regulation of cell shape"/>
    <property type="evidence" value="ECO:0007669"/>
    <property type="project" value="UniProtKB-KW"/>
</dbReference>
<dbReference type="FunFam" id="3.40.50.1860:FF:000001">
    <property type="entry name" value="Glutamate racemase"/>
    <property type="match status" value="1"/>
</dbReference>
<dbReference type="Gene3D" id="3.40.50.1860">
    <property type="match status" value="2"/>
</dbReference>
<dbReference type="HAMAP" id="MF_00258">
    <property type="entry name" value="Glu_racemase"/>
    <property type="match status" value="1"/>
</dbReference>
<dbReference type="InterPro" id="IPR015942">
    <property type="entry name" value="Asp/Glu/hydantoin_racemase"/>
</dbReference>
<dbReference type="InterPro" id="IPR001920">
    <property type="entry name" value="Asp/Glu_race"/>
</dbReference>
<dbReference type="InterPro" id="IPR018187">
    <property type="entry name" value="Asp/Glu_racemase_AS_1"/>
</dbReference>
<dbReference type="InterPro" id="IPR033134">
    <property type="entry name" value="Asp/Glu_racemase_AS_2"/>
</dbReference>
<dbReference type="InterPro" id="IPR004391">
    <property type="entry name" value="Glu_race"/>
</dbReference>
<dbReference type="NCBIfam" id="TIGR00067">
    <property type="entry name" value="glut_race"/>
    <property type="match status" value="1"/>
</dbReference>
<dbReference type="NCBIfam" id="NF002034">
    <property type="entry name" value="PRK00865.1-1"/>
    <property type="match status" value="1"/>
</dbReference>
<dbReference type="PANTHER" id="PTHR21198">
    <property type="entry name" value="GLUTAMATE RACEMASE"/>
    <property type="match status" value="1"/>
</dbReference>
<dbReference type="PANTHER" id="PTHR21198:SF2">
    <property type="entry name" value="GLUTAMATE RACEMASE"/>
    <property type="match status" value="1"/>
</dbReference>
<dbReference type="Pfam" id="PF01177">
    <property type="entry name" value="Asp_Glu_race"/>
    <property type="match status" value="1"/>
</dbReference>
<dbReference type="SUPFAM" id="SSF53681">
    <property type="entry name" value="Aspartate/glutamate racemase"/>
    <property type="match status" value="2"/>
</dbReference>
<dbReference type="PROSITE" id="PS00923">
    <property type="entry name" value="ASP_GLU_RACEMASE_1"/>
    <property type="match status" value="1"/>
</dbReference>
<dbReference type="PROSITE" id="PS00924">
    <property type="entry name" value="ASP_GLU_RACEMASE_2"/>
    <property type="match status" value="1"/>
</dbReference>
<accession>B4F1H6</accession>
<sequence>MAIARQDVNISSPEATTSDAQSTANPTVLVFDSGVGGLSIYREIREKLPDAHYIYVFDNEAFPYGEKPQEFIIERVVRIVSAVAQQHELAAIVIACNTASTVSLPALRAKFTDIPIVGVVPAIKPAAKLTCNGVVGLLATRATVKRPYTHELIERFATECKVHLLGSAELVELAEKKLHGEKVSCDELRRILAPWLKMKEPPDTVVLGCTHFPLLEEELLSVLPDGTRIIDSGGAIARRTAWLVVNQDKIRGSKEISFAYCLKEDEYSELLKPVLADFGFKMLRKLAL</sequence>
<proteinExistence type="inferred from homology"/>
<keyword id="KW-0133">Cell shape</keyword>
<keyword id="KW-0961">Cell wall biogenesis/degradation</keyword>
<keyword id="KW-0413">Isomerase</keyword>
<keyword id="KW-0573">Peptidoglycan synthesis</keyword>
<keyword id="KW-1185">Reference proteome</keyword>
<name>MURI_PROMH</name>
<reference key="1">
    <citation type="journal article" date="2008" name="J. Bacteriol.">
        <title>Complete genome sequence of uropathogenic Proteus mirabilis, a master of both adherence and motility.</title>
        <authorList>
            <person name="Pearson M.M."/>
            <person name="Sebaihia M."/>
            <person name="Churcher C."/>
            <person name="Quail M.A."/>
            <person name="Seshasayee A.S."/>
            <person name="Luscombe N.M."/>
            <person name="Abdellah Z."/>
            <person name="Arrosmith C."/>
            <person name="Atkin B."/>
            <person name="Chillingworth T."/>
            <person name="Hauser H."/>
            <person name="Jagels K."/>
            <person name="Moule S."/>
            <person name="Mungall K."/>
            <person name="Norbertczak H."/>
            <person name="Rabbinowitsch E."/>
            <person name="Walker D."/>
            <person name="Whithead S."/>
            <person name="Thomson N.R."/>
            <person name="Rather P.N."/>
            <person name="Parkhill J."/>
            <person name="Mobley H.L.T."/>
        </authorList>
    </citation>
    <scope>NUCLEOTIDE SEQUENCE [LARGE SCALE GENOMIC DNA]</scope>
    <source>
        <strain>HI4320</strain>
    </source>
</reference>
<comment type="function">
    <text evidence="1">Provides the (R)-glutamate required for cell wall biosynthesis.</text>
</comment>
<comment type="catalytic activity">
    <reaction evidence="1">
        <text>L-glutamate = D-glutamate</text>
        <dbReference type="Rhea" id="RHEA:12813"/>
        <dbReference type="ChEBI" id="CHEBI:29985"/>
        <dbReference type="ChEBI" id="CHEBI:29986"/>
        <dbReference type="EC" id="5.1.1.3"/>
    </reaction>
</comment>
<comment type="pathway">
    <text evidence="1">Cell wall biogenesis; peptidoglycan biosynthesis.</text>
</comment>
<comment type="similarity">
    <text evidence="1">Belongs to the aspartate/glutamate racemases family.</text>
</comment>